<feature type="chain" id="PRO_1000134412" description="Sulfurtransferase TusD">
    <location>
        <begin position="1"/>
        <end position="128"/>
    </location>
</feature>
<feature type="active site" description="Cysteine persulfide intermediate" evidence="1">
    <location>
        <position position="78"/>
    </location>
</feature>
<sequence length="128" mass="14417">MNYTILVTGPPYGTQNSSTAFLFCQSLLKTKHILHSVFFYCDGVLNANNMTTPAIDEFNLINAWQGLNKKHQVKLYVCNSAALRRGVIEDEKLFNMNVKKGNLALSFQLSGLIELAKSIKICDRIIQF</sequence>
<proteinExistence type="inferred from homology"/>
<dbReference type="EC" id="2.8.1.-" evidence="1"/>
<dbReference type="EMBL" id="CP001161">
    <property type="protein sequence ID" value="ACL30876.1"/>
    <property type="molecule type" value="Genomic_DNA"/>
</dbReference>
<dbReference type="RefSeq" id="WP_009874483.1">
    <property type="nucleotide sequence ID" value="NC_011833.1"/>
</dbReference>
<dbReference type="SMR" id="B8D9V5"/>
<dbReference type="KEGG" id="bap:BUAP5A_525"/>
<dbReference type="HOGENOM" id="CLU_132095_0_0_6"/>
<dbReference type="OrthoDB" id="9787483at2"/>
<dbReference type="Proteomes" id="UP000006904">
    <property type="component" value="Chromosome"/>
</dbReference>
<dbReference type="GO" id="GO:1990228">
    <property type="term" value="C:sulfurtransferase complex"/>
    <property type="evidence" value="ECO:0007669"/>
    <property type="project" value="TreeGrafter"/>
</dbReference>
<dbReference type="GO" id="GO:0097163">
    <property type="term" value="F:sulfur carrier activity"/>
    <property type="evidence" value="ECO:0007669"/>
    <property type="project" value="TreeGrafter"/>
</dbReference>
<dbReference type="GO" id="GO:0016783">
    <property type="term" value="F:sulfurtransferase activity"/>
    <property type="evidence" value="ECO:0007669"/>
    <property type="project" value="UniProtKB-UniRule"/>
</dbReference>
<dbReference type="GO" id="GO:0002143">
    <property type="term" value="P:tRNA wobble position uridine thiolation"/>
    <property type="evidence" value="ECO:0007669"/>
    <property type="project" value="TreeGrafter"/>
</dbReference>
<dbReference type="FunFam" id="3.40.1260.10:FF:000001">
    <property type="entry name" value="Sulfurtransferase TusD"/>
    <property type="match status" value="1"/>
</dbReference>
<dbReference type="Gene3D" id="3.40.1260.10">
    <property type="entry name" value="DsrEFH-like"/>
    <property type="match status" value="1"/>
</dbReference>
<dbReference type="HAMAP" id="MF_00390">
    <property type="entry name" value="Thiourid_synth_D"/>
    <property type="match status" value="1"/>
</dbReference>
<dbReference type="InterPro" id="IPR027396">
    <property type="entry name" value="DsrEFH-like"/>
</dbReference>
<dbReference type="InterPro" id="IPR003787">
    <property type="entry name" value="Sulphur_relay_DsrE/F-like"/>
</dbReference>
<dbReference type="InterPro" id="IPR017463">
    <property type="entry name" value="Sulphur_relay_TusD/DsrE"/>
</dbReference>
<dbReference type="NCBIfam" id="NF001237">
    <property type="entry name" value="PRK00207.1"/>
    <property type="match status" value="1"/>
</dbReference>
<dbReference type="NCBIfam" id="TIGR03012">
    <property type="entry name" value="sulf_tusD_dsrE"/>
    <property type="match status" value="1"/>
</dbReference>
<dbReference type="PANTHER" id="PTHR34874">
    <property type="entry name" value="PROTEIN YCHN"/>
    <property type="match status" value="1"/>
</dbReference>
<dbReference type="PANTHER" id="PTHR34874:SF3">
    <property type="entry name" value="SULFURTRANSFERASE TUSD"/>
    <property type="match status" value="1"/>
</dbReference>
<dbReference type="Pfam" id="PF02635">
    <property type="entry name" value="DsrE"/>
    <property type="match status" value="1"/>
</dbReference>
<dbReference type="SUPFAM" id="SSF75169">
    <property type="entry name" value="DsrEFH-like"/>
    <property type="match status" value="1"/>
</dbReference>
<name>TUSD_BUCA5</name>
<gene>
    <name evidence="1" type="primary">tusD</name>
    <name type="ordered locus">BUAP5A_525</name>
</gene>
<evidence type="ECO:0000255" key="1">
    <source>
        <dbReference type="HAMAP-Rule" id="MF_00390"/>
    </source>
</evidence>
<comment type="function">
    <text evidence="1">Part of a sulfur-relay system required for 2-thiolation of 5-methylaminomethyl-2-thiouridine (mnm(5)s(2)U) at tRNA wobble positions. Accepts sulfur from TusA and transfers it in turn to TusE.</text>
</comment>
<comment type="subunit">
    <text evidence="1">Heterohexamer, formed by a dimer of trimers. The hexameric TusBCD complex contains 2 copies each of TusB, TusC and TusD. The TusBCD complex interacts with TusE.</text>
</comment>
<comment type="subcellular location">
    <subcellularLocation>
        <location evidence="1">Cytoplasm</location>
    </subcellularLocation>
</comment>
<comment type="similarity">
    <text evidence="1">Belongs to the DsrE/TusD family.</text>
</comment>
<keyword id="KW-0963">Cytoplasm</keyword>
<keyword id="KW-0808">Transferase</keyword>
<keyword id="KW-0819">tRNA processing</keyword>
<protein>
    <recommendedName>
        <fullName evidence="1">Sulfurtransferase TusD</fullName>
        <ecNumber evidence="1">2.8.1.-</ecNumber>
    </recommendedName>
    <alternativeName>
        <fullName evidence="1">tRNA 2-thiouridine synthesizing protein D</fullName>
    </alternativeName>
</protein>
<organism>
    <name type="scientific">Buchnera aphidicola subsp. Acyrthosiphon pisum (strain 5A)</name>
    <dbReference type="NCBI Taxonomy" id="563178"/>
    <lineage>
        <taxon>Bacteria</taxon>
        <taxon>Pseudomonadati</taxon>
        <taxon>Pseudomonadota</taxon>
        <taxon>Gammaproteobacteria</taxon>
        <taxon>Enterobacterales</taxon>
        <taxon>Erwiniaceae</taxon>
        <taxon>Buchnera</taxon>
    </lineage>
</organism>
<accession>B8D9V5</accession>
<reference key="1">
    <citation type="journal article" date="2009" name="Science">
        <title>The dynamics and time scale of ongoing genomic erosion in symbiotic bacteria.</title>
        <authorList>
            <person name="Moran N.A."/>
            <person name="McLaughlin H.J."/>
            <person name="Sorek R."/>
        </authorList>
    </citation>
    <scope>NUCLEOTIDE SEQUENCE [LARGE SCALE GENOMIC DNA]</scope>
    <source>
        <strain>5A</strain>
    </source>
</reference>